<name>RL23_MYCS2</name>
<reference key="1">
    <citation type="submission" date="2006-10" db="EMBL/GenBank/DDBJ databases">
        <authorList>
            <person name="Fleischmann R.D."/>
            <person name="Dodson R.J."/>
            <person name="Haft D.H."/>
            <person name="Merkel J.S."/>
            <person name="Nelson W.C."/>
            <person name="Fraser C.M."/>
        </authorList>
    </citation>
    <scope>NUCLEOTIDE SEQUENCE [LARGE SCALE GENOMIC DNA]</scope>
    <source>
        <strain>ATCC 700084 / mc(2)155</strain>
    </source>
</reference>
<reference key="2">
    <citation type="journal article" date="2007" name="Genome Biol.">
        <title>Interrupted coding sequences in Mycobacterium smegmatis: authentic mutations or sequencing errors?</title>
        <authorList>
            <person name="Deshayes C."/>
            <person name="Perrodou E."/>
            <person name="Gallien S."/>
            <person name="Euphrasie D."/>
            <person name="Schaeffer C."/>
            <person name="Van-Dorsselaer A."/>
            <person name="Poch O."/>
            <person name="Lecompte O."/>
            <person name="Reyrat J.-M."/>
        </authorList>
    </citation>
    <scope>NUCLEOTIDE SEQUENCE [LARGE SCALE GENOMIC DNA]</scope>
    <source>
        <strain>ATCC 700084 / mc(2)155</strain>
    </source>
</reference>
<reference key="3">
    <citation type="journal article" date="2009" name="Genome Res.">
        <title>Ortho-proteogenomics: multiple proteomes investigation through orthology and a new MS-based protocol.</title>
        <authorList>
            <person name="Gallien S."/>
            <person name="Perrodou E."/>
            <person name="Carapito C."/>
            <person name="Deshayes C."/>
            <person name="Reyrat J.-M."/>
            <person name="Van Dorsselaer A."/>
            <person name="Poch O."/>
            <person name="Schaeffer C."/>
            <person name="Lecompte O."/>
        </authorList>
    </citation>
    <scope>NUCLEOTIDE SEQUENCE [LARGE SCALE GENOMIC DNA]</scope>
    <scope>IDENTIFICATION BY MASS SPECTROMETRY [LARGE SCALE ANALYSIS]</scope>
    <scope>CLEAVAGE OF INITIATOR METHIONINE</scope>
    <source>
        <strain>ATCC 700084 / mc(2)155</strain>
    </source>
</reference>
<protein>
    <recommendedName>
        <fullName evidence="1">Large ribosomal subunit protein uL23</fullName>
    </recommendedName>
    <alternativeName>
        <fullName evidence="3">50S ribosomal protein L23</fullName>
    </alternativeName>
</protein>
<evidence type="ECO:0000255" key="1">
    <source>
        <dbReference type="HAMAP-Rule" id="MF_01369"/>
    </source>
</evidence>
<evidence type="ECO:0000269" key="2">
    <source>
    </source>
</evidence>
<evidence type="ECO:0000305" key="3"/>
<evidence type="ECO:0007829" key="4">
    <source>
        <dbReference type="PDB" id="5XYM"/>
    </source>
</evidence>
<evidence type="ECO:0007829" key="5">
    <source>
        <dbReference type="PDB" id="6DZP"/>
    </source>
</evidence>
<evidence type="ECO:0007829" key="6">
    <source>
        <dbReference type="PDB" id="7XAM"/>
    </source>
</evidence>
<sequence length="100" mass="11028">MATITDPRDIILAPVISEKSYGLIEDNVYTFVVHPDSNKTQIKIAIEKIFDVKVDSVNTANRQGKRKRTRTGFGKRKSTKRAIVKLAAGSKPIDLFGAPA</sequence>
<accession>A0QSD3</accession>
<accession>I7F8J1</accession>
<dbReference type="EMBL" id="CP000480">
    <property type="protein sequence ID" value="ABK70487.1"/>
    <property type="molecule type" value="Genomic_DNA"/>
</dbReference>
<dbReference type="EMBL" id="CP001663">
    <property type="protein sequence ID" value="AFP37875.1"/>
    <property type="molecule type" value="Genomic_DNA"/>
</dbReference>
<dbReference type="RefSeq" id="WP_003892825.1">
    <property type="nucleotide sequence ID" value="NZ_SIJM01000016.1"/>
</dbReference>
<dbReference type="RefSeq" id="YP_885821.1">
    <property type="nucleotide sequence ID" value="NC_008596.1"/>
</dbReference>
<dbReference type="PDB" id="5O60">
    <property type="method" value="EM"/>
    <property type="resolution" value="3.20 A"/>
    <property type="chains" value="U=1-100"/>
</dbReference>
<dbReference type="PDB" id="5O61">
    <property type="method" value="EM"/>
    <property type="resolution" value="3.31 A"/>
    <property type="chains" value="U=1-100"/>
</dbReference>
<dbReference type="PDB" id="5XYM">
    <property type="method" value="EM"/>
    <property type="resolution" value="3.08 A"/>
    <property type="chains" value="T=1-100"/>
</dbReference>
<dbReference type="PDB" id="5ZEB">
    <property type="method" value="EM"/>
    <property type="resolution" value="3.40 A"/>
    <property type="chains" value="U=1-100"/>
</dbReference>
<dbReference type="PDB" id="5ZEP">
    <property type="method" value="EM"/>
    <property type="resolution" value="3.40 A"/>
    <property type="chains" value="U=1-100"/>
</dbReference>
<dbReference type="PDB" id="5ZET">
    <property type="method" value="EM"/>
    <property type="resolution" value="3.20 A"/>
    <property type="chains" value="U=1-100"/>
</dbReference>
<dbReference type="PDB" id="6DZI">
    <property type="method" value="EM"/>
    <property type="resolution" value="3.46 A"/>
    <property type="chains" value="U=2-98"/>
</dbReference>
<dbReference type="PDB" id="6DZP">
    <property type="method" value="EM"/>
    <property type="resolution" value="3.42 A"/>
    <property type="chains" value="U=2-100"/>
</dbReference>
<dbReference type="PDB" id="7S0S">
    <property type="method" value="EM"/>
    <property type="resolution" value="3.05 A"/>
    <property type="chains" value="V=2-98"/>
</dbReference>
<dbReference type="PDB" id="7XAM">
    <property type="method" value="EM"/>
    <property type="resolution" value="2.80 A"/>
    <property type="chains" value="U=1-100"/>
</dbReference>
<dbReference type="PDB" id="7Y41">
    <property type="method" value="EM"/>
    <property type="resolution" value="4.10 A"/>
    <property type="chains" value="U=1-100"/>
</dbReference>
<dbReference type="PDB" id="8FR8">
    <property type="method" value="EM"/>
    <property type="resolution" value="2.76 A"/>
    <property type="chains" value="Z=2-98"/>
</dbReference>
<dbReference type="PDB" id="8KAB">
    <property type="method" value="EM"/>
    <property type="resolution" value="3.30 A"/>
    <property type="chains" value="U=1-100"/>
</dbReference>
<dbReference type="PDB" id="8V9J">
    <property type="method" value="EM"/>
    <property type="resolution" value="3.10 A"/>
    <property type="chains" value="V=1-100"/>
</dbReference>
<dbReference type="PDB" id="8V9K">
    <property type="method" value="EM"/>
    <property type="resolution" value="3.10 A"/>
    <property type="chains" value="V=1-100"/>
</dbReference>
<dbReference type="PDB" id="8V9L">
    <property type="method" value="EM"/>
    <property type="resolution" value="3.00 A"/>
    <property type="chains" value="V=1-100"/>
</dbReference>
<dbReference type="PDB" id="8VIO">
    <property type="method" value="EM"/>
    <property type="resolution" value="3.26 A"/>
    <property type="chains" value="U=1-100"/>
</dbReference>
<dbReference type="PDB" id="8VK0">
    <property type="method" value="EM"/>
    <property type="resolution" value="3.14 A"/>
    <property type="chains" value="U=1-100"/>
</dbReference>
<dbReference type="PDB" id="8VK7">
    <property type="method" value="EM"/>
    <property type="resolution" value="3.09 A"/>
    <property type="chains" value="U=1-100"/>
</dbReference>
<dbReference type="PDB" id="8VKI">
    <property type="method" value="EM"/>
    <property type="resolution" value="2.96 A"/>
    <property type="chains" value="U=1-100"/>
</dbReference>
<dbReference type="PDB" id="8VKW">
    <property type="method" value="EM"/>
    <property type="resolution" value="3.44 A"/>
    <property type="chains" value="U=1-100"/>
</dbReference>
<dbReference type="PDB" id="8VR4">
    <property type="method" value="EM"/>
    <property type="resolution" value="2.80 A"/>
    <property type="chains" value="U=1-100"/>
</dbReference>
<dbReference type="PDB" id="8VR8">
    <property type="method" value="EM"/>
    <property type="resolution" value="3.25 A"/>
    <property type="chains" value="U=1-100"/>
</dbReference>
<dbReference type="PDB" id="8VRL">
    <property type="method" value="EM"/>
    <property type="resolution" value="3.33 A"/>
    <property type="chains" value="U=1-100"/>
</dbReference>
<dbReference type="PDB" id="8WHX">
    <property type="method" value="EM"/>
    <property type="resolution" value="2.80 A"/>
    <property type="chains" value="W=1-100"/>
</dbReference>
<dbReference type="PDB" id="8WHY">
    <property type="method" value="EM"/>
    <property type="resolution" value="2.70 A"/>
    <property type="chains" value="W=1-100"/>
</dbReference>
<dbReference type="PDB" id="8WI7">
    <property type="method" value="EM"/>
    <property type="resolution" value="3.50 A"/>
    <property type="chains" value="W=1-100"/>
</dbReference>
<dbReference type="PDB" id="8WI8">
    <property type="method" value="EM"/>
    <property type="resolution" value="2.70 A"/>
    <property type="chains" value="W=1-100"/>
</dbReference>
<dbReference type="PDB" id="8WIB">
    <property type="method" value="EM"/>
    <property type="resolution" value="3.50 A"/>
    <property type="chains" value="W=1-100"/>
</dbReference>
<dbReference type="PDB" id="8WIC">
    <property type="method" value="EM"/>
    <property type="resolution" value="3.50 A"/>
    <property type="chains" value="W=1-100"/>
</dbReference>
<dbReference type="PDB" id="8XZ3">
    <property type="method" value="EM"/>
    <property type="resolution" value="3.60 A"/>
    <property type="chains" value="U=2-98"/>
</dbReference>
<dbReference type="PDBsum" id="5O60"/>
<dbReference type="PDBsum" id="5O61"/>
<dbReference type="PDBsum" id="5XYM"/>
<dbReference type="PDBsum" id="5ZEB"/>
<dbReference type="PDBsum" id="5ZEP"/>
<dbReference type="PDBsum" id="5ZET"/>
<dbReference type="PDBsum" id="6DZI"/>
<dbReference type="PDBsum" id="6DZP"/>
<dbReference type="PDBsum" id="7S0S"/>
<dbReference type="PDBsum" id="7XAM"/>
<dbReference type="PDBsum" id="7Y41"/>
<dbReference type="PDBsum" id="8FR8"/>
<dbReference type="PDBsum" id="8KAB"/>
<dbReference type="PDBsum" id="8V9J"/>
<dbReference type="PDBsum" id="8V9K"/>
<dbReference type="PDBsum" id="8V9L"/>
<dbReference type="PDBsum" id="8VIO"/>
<dbReference type="PDBsum" id="8VK0"/>
<dbReference type="PDBsum" id="8VK7"/>
<dbReference type="PDBsum" id="8VKI"/>
<dbReference type="PDBsum" id="8VKW"/>
<dbReference type="PDBsum" id="8VR4"/>
<dbReference type="PDBsum" id="8VR8"/>
<dbReference type="PDBsum" id="8VRL"/>
<dbReference type="PDBsum" id="8WHX"/>
<dbReference type="PDBsum" id="8WHY"/>
<dbReference type="PDBsum" id="8WI7"/>
<dbReference type="PDBsum" id="8WI8"/>
<dbReference type="PDBsum" id="8WIB"/>
<dbReference type="PDBsum" id="8WIC"/>
<dbReference type="PDBsum" id="8XZ3"/>
<dbReference type="EMDB" id="EMD-29397"/>
<dbReference type="EMDB" id="EMD-33096"/>
<dbReference type="EMDB" id="EMD-33599"/>
<dbReference type="EMDB" id="EMD-37007"/>
<dbReference type="EMDB" id="EMD-3750"/>
<dbReference type="EMDB" id="EMD-3751"/>
<dbReference type="EMDB" id="EMD-37551"/>
<dbReference type="EMDB" id="EMD-37552"/>
<dbReference type="EMDB" id="EMD-37559"/>
<dbReference type="EMDB" id="EMD-37560"/>
<dbReference type="EMDB" id="EMD-37562"/>
<dbReference type="EMDB" id="EMD-37563"/>
<dbReference type="EMDB" id="EMD-38788"/>
<dbReference type="EMDB" id="EMD-43074"/>
<dbReference type="EMDB" id="EMD-43075"/>
<dbReference type="EMDB" id="EMD-43076"/>
<dbReference type="EMDB" id="EMD-43267"/>
<dbReference type="EMDB" id="EMD-43294"/>
<dbReference type="EMDB" id="EMD-43305"/>
<dbReference type="EMDB" id="EMD-43317"/>
<dbReference type="EMDB" id="EMD-43333"/>
<dbReference type="EMDB" id="EMD-43476"/>
<dbReference type="EMDB" id="EMD-43477"/>
<dbReference type="EMDB" id="EMD-43484"/>
<dbReference type="EMDB" id="EMD-6789"/>
<dbReference type="EMDB" id="EMD-6920"/>
<dbReference type="EMDB" id="EMD-6921"/>
<dbReference type="EMDB" id="EMD-6922"/>
<dbReference type="EMDB" id="EMD-8932"/>
<dbReference type="EMDB" id="EMD-8937"/>
<dbReference type="SMR" id="A0QSD3"/>
<dbReference type="IntAct" id="A0QSD3">
    <property type="interactions" value="3"/>
</dbReference>
<dbReference type="STRING" id="246196.MSMEG_1438"/>
<dbReference type="PaxDb" id="246196-MSMEI_1402"/>
<dbReference type="GeneID" id="93456282"/>
<dbReference type="KEGG" id="msb:LJ00_07175"/>
<dbReference type="KEGG" id="msg:MSMEI_1402"/>
<dbReference type="KEGG" id="msm:MSMEG_1438"/>
<dbReference type="PATRIC" id="fig|246196.19.peg.1424"/>
<dbReference type="eggNOG" id="COG0089">
    <property type="taxonomic scope" value="Bacteria"/>
</dbReference>
<dbReference type="OrthoDB" id="9793353at2"/>
<dbReference type="Proteomes" id="UP000000757">
    <property type="component" value="Chromosome"/>
</dbReference>
<dbReference type="Proteomes" id="UP000006158">
    <property type="component" value="Chromosome"/>
</dbReference>
<dbReference type="GO" id="GO:1990904">
    <property type="term" value="C:ribonucleoprotein complex"/>
    <property type="evidence" value="ECO:0007669"/>
    <property type="project" value="UniProtKB-KW"/>
</dbReference>
<dbReference type="GO" id="GO:0005840">
    <property type="term" value="C:ribosome"/>
    <property type="evidence" value="ECO:0007669"/>
    <property type="project" value="UniProtKB-KW"/>
</dbReference>
<dbReference type="GO" id="GO:0019843">
    <property type="term" value="F:rRNA binding"/>
    <property type="evidence" value="ECO:0007669"/>
    <property type="project" value="UniProtKB-UniRule"/>
</dbReference>
<dbReference type="GO" id="GO:0003735">
    <property type="term" value="F:structural constituent of ribosome"/>
    <property type="evidence" value="ECO:0007669"/>
    <property type="project" value="InterPro"/>
</dbReference>
<dbReference type="GO" id="GO:0006412">
    <property type="term" value="P:translation"/>
    <property type="evidence" value="ECO:0007669"/>
    <property type="project" value="UniProtKB-UniRule"/>
</dbReference>
<dbReference type="FunFam" id="3.30.70.330:FF:000001">
    <property type="entry name" value="50S ribosomal protein L23"/>
    <property type="match status" value="1"/>
</dbReference>
<dbReference type="Gene3D" id="3.30.70.330">
    <property type="match status" value="1"/>
</dbReference>
<dbReference type="HAMAP" id="MF_01369_B">
    <property type="entry name" value="Ribosomal_uL23_B"/>
    <property type="match status" value="1"/>
</dbReference>
<dbReference type="InterPro" id="IPR012677">
    <property type="entry name" value="Nucleotide-bd_a/b_plait_sf"/>
</dbReference>
<dbReference type="InterPro" id="IPR013025">
    <property type="entry name" value="Ribosomal_uL23-like"/>
</dbReference>
<dbReference type="InterPro" id="IPR012678">
    <property type="entry name" value="Ribosomal_uL23/eL15/eS24_sf"/>
</dbReference>
<dbReference type="InterPro" id="IPR001014">
    <property type="entry name" value="Ribosomal_uL23_CS"/>
</dbReference>
<dbReference type="NCBIfam" id="NF004363">
    <property type="entry name" value="PRK05738.2-4"/>
    <property type="match status" value="1"/>
</dbReference>
<dbReference type="NCBIfam" id="NF004364">
    <property type="entry name" value="PRK05738.2-5"/>
    <property type="match status" value="1"/>
</dbReference>
<dbReference type="PANTHER" id="PTHR11620">
    <property type="entry name" value="60S RIBOSOMAL PROTEIN L23A"/>
    <property type="match status" value="1"/>
</dbReference>
<dbReference type="Pfam" id="PF00276">
    <property type="entry name" value="Ribosomal_L23"/>
    <property type="match status" value="1"/>
</dbReference>
<dbReference type="SUPFAM" id="SSF54189">
    <property type="entry name" value="Ribosomal proteins S24e, L23 and L15e"/>
    <property type="match status" value="1"/>
</dbReference>
<dbReference type="PROSITE" id="PS00050">
    <property type="entry name" value="RIBOSOMAL_L23"/>
    <property type="match status" value="1"/>
</dbReference>
<feature type="initiator methionine" description="Removed" evidence="2">
    <location>
        <position position="1"/>
    </location>
</feature>
<feature type="chain" id="PRO_1000068113" description="Large ribosomal subunit protein uL23">
    <location>
        <begin position="2"/>
        <end position="100"/>
    </location>
</feature>
<feature type="helix" evidence="4">
    <location>
        <begin position="8"/>
        <end position="11"/>
    </location>
</feature>
<feature type="helix" evidence="4">
    <location>
        <begin position="18"/>
        <end position="24"/>
    </location>
</feature>
<feature type="turn" evidence="4">
    <location>
        <begin position="25"/>
        <end position="27"/>
    </location>
</feature>
<feature type="strand" evidence="4">
    <location>
        <begin position="28"/>
        <end position="31"/>
    </location>
</feature>
<feature type="helix" evidence="4">
    <location>
        <begin position="39"/>
        <end position="50"/>
    </location>
</feature>
<feature type="strand" evidence="5">
    <location>
        <begin position="54"/>
        <end position="57"/>
    </location>
</feature>
<feature type="strand" evidence="4">
    <location>
        <begin position="59"/>
        <end position="62"/>
    </location>
</feature>
<feature type="strand" evidence="6">
    <location>
        <begin position="70"/>
        <end position="73"/>
    </location>
</feature>
<feature type="strand" evidence="4">
    <location>
        <begin position="79"/>
        <end position="85"/>
    </location>
</feature>
<feature type="helix" evidence="5">
    <location>
        <begin position="94"/>
        <end position="96"/>
    </location>
</feature>
<gene>
    <name evidence="1" type="primary">rplW</name>
    <name type="ordered locus">MSMEG_1438</name>
    <name type="ordered locus">MSMEI_1402</name>
</gene>
<keyword id="KW-0002">3D-structure</keyword>
<keyword id="KW-1185">Reference proteome</keyword>
<keyword id="KW-0687">Ribonucleoprotein</keyword>
<keyword id="KW-0689">Ribosomal protein</keyword>
<keyword id="KW-0694">RNA-binding</keyword>
<keyword id="KW-0699">rRNA-binding</keyword>
<comment type="function">
    <text evidence="1">One of the early assembly proteins it binds 23S rRNA. One of the proteins that surrounds the polypeptide exit tunnel on the outside of the ribosome. Forms the main docking site for trigger factor binding to the ribosome.</text>
</comment>
<comment type="subunit">
    <text evidence="1">Part of the 50S ribosomal subunit. Contacts protein L29, and trigger factor when it is bound to the ribosome.</text>
</comment>
<comment type="similarity">
    <text evidence="1">Belongs to the universal ribosomal protein uL23 family.</text>
</comment>
<organism>
    <name type="scientific">Mycolicibacterium smegmatis (strain ATCC 700084 / mc(2)155)</name>
    <name type="common">Mycobacterium smegmatis</name>
    <dbReference type="NCBI Taxonomy" id="246196"/>
    <lineage>
        <taxon>Bacteria</taxon>
        <taxon>Bacillati</taxon>
        <taxon>Actinomycetota</taxon>
        <taxon>Actinomycetes</taxon>
        <taxon>Mycobacteriales</taxon>
        <taxon>Mycobacteriaceae</taxon>
        <taxon>Mycolicibacterium</taxon>
    </lineage>
</organism>
<proteinExistence type="evidence at protein level"/>